<name>HCS_KITSK</name>
<proteinExistence type="evidence at protein level"/>
<feature type="chain" id="PRO_0000444712" description="(2Z,6E)-hedycaryol synthase">
    <location>
        <begin position="1"/>
        <end position="338"/>
    </location>
</feature>
<feature type="short sequence motif" description="DDXXXE motif" evidence="5">
    <location>
        <begin position="82"/>
        <end position="87"/>
    </location>
</feature>
<feature type="short sequence motif" description="NXXXSXXXE motif" evidence="5">
    <location>
        <begin position="221"/>
        <end position="229"/>
    </location>
</feature>
<feature type="binding site" evidence="1">
    <location>
        <position position="82"/>
    </location>
    <ligand>
        <name>Mg(2+)</name>
        <dbReference type="ChEBI" id="CHEBI:18420"/>
        <label>1</label>
    </ligand>
</feature>
<feature type="binding site" evidence="1">
    <location>
        <position position="87"/>
    </location>
    <ligand>
        <name>Mg(2+)</name>
        <dbReference type="ChEBI" id="CHEBI:18420"/>
        <label>1</label>
    </ligand>
</feature>
<feature type="binding site" evidence="1">
    <location>
        <position position="87"/>
    </location>
    <ligand>
        <name>Mg(2+)</name>
        <dbReference type="ChEBI" id="CHEBI:18420"/>
        <label>2</label>
    </ligand>
</feature>
<feature type="binding site" evidence="1">
    <location>
        <position position="175"/>
    </location>
    <ligand>
        <name>substrate</name>
    </ligand>
</feature>
<feature type="binding site" evidence="1">
    <location>
        <position position="221"/>
    </location>
    <ligand>
        <name>Mg(2+)</name>
        <dbReference type="ChEBI" id="CHEBI:18420"/>
        <label>3</label>
    </ligand>
</feature>
<feature type="binding site" evidence="1">
    <location>
        <position position="225"/>
    </location>
    <ligand>
        <name>Mg(2+)</name>
        <dbReference type="ChEBI" id="CHEBI:18420"/>
        <label>3</label>
    </ligand>
</feature>
<feature type="binding site" evidence="1">
    <location>
        <position position="228"/>
    </location>
    <ligand>
        <name>substrate</name>
    </ligand>
</feature>
<feature type="binding site" evidence="1">
    <location>
        <position position="229"/>
    </location>
    <ligand>
        <name>Mg(2+)</name>
        <dbReference type="ChEBI" id="CHEBI:18420"/>
        <label>3</label>
    </ligand>
</feature>
<feature type="site" description="Important for the cation stabilization at C-11" evidence="2">
    <location>
        <position position="149"/>
    </location>
</feature>
<feature type="mutagenesis site" description="Loss of synthase activity." evidence="2">
    <original>S</original>
    <variation>W</variation>
    <location>
        <position position="55"/>
    </location>
</feature>
<feature type="mutagenesis site" description="Loss of synthase activity at pH 7.0. Strongly reduced synthase activity at pH 8.5." evidence="2">
    <original>D</original>
    <variation>N</variation>
    <location>
        <position position="82"/>
    </location>
</feature>
<feature type="mutagenesis site" description="Loss of synthase activity at pH 7.0. Strongly reduced synthase activity at pH 8.5." evidence="2">
    <original>F</original>
    <variation>L</variation>
    <location>
        <position position="149"/>
    </location>
</feature>
<feature type="mutagenesis site" description="No effect on synthase activity at pH 7 and 8.5." evidence="2">
    <original>F</original>
    <variation>W</variation>
    <location>
        <position position="149"/>
    </location>
</feature>
<feature type="mutagenesis site" description="Loss of synthase activity at pH 7.0. Strongly reduced synthase activity at pH 8.5." evidence="2">
    <original>M</original>
    <variation>H</variation>
    <location>
        <position position="181"/>
    </location>
</feature>
<feature type="mutagenesis site" description="Loss of synthase activity." evidence="2">
    <original>M</original>
    <variation>K</variation>
    <location>
        <position position="181"/>
    </location>
</feature>
<feature type="mutagenesis site" description="No effect on synthase activity at pH 7 and 8.5." evidence="2">
    <original>W</original>
    <variation>F</variation>
    <variation>L</variation>
    <variation>Y</variation>
    <location>
        <position position="309"/>
    </location>
</feature>
<feature type="mutagenesis site" description="Loss of synthase activity." evidence="2">
    <original>H</original>
    <variation>S</variation>
    <location>
        <position position="310"/>
    </location>
</feature>
<feature type="mutagenesis site" description="No effect on synthase activity at pH 7 and 8.5." evidence="2">
    <original>R</original>
    <variation>K</variation>
    <location>
        <position position="315"/>
    </location>
</feature>
<feature type="mutagenesis site" description="No effect on synthase activity at pH 7 and 8.5." evidence="2">
    <original>Y</original>
    <variation>F</variation>
    <location>
        <position position="316"/>
    </location>
</feature>
<feature type="helix" evidence="9">
    <location>
        <begin position="21"/>
        <end position="35"/>
    </location>
</feature>
<feature type="helix" evidence="9">
    <location>
        <begin position="41"/>
        <end position="50"/>
    </location>
</feature>
<feature type="helix" evidence="9">
    <location>
        <begin position="52"/>
        <end position="59"/>
    </location>
</feature>
<feature type="helix" evidence="9">
    <location>
        <begin position="65"/>
        <end position="84"/>
    </location>
</feature>
<feature type="helix" evidence="9">
    <location>
        <begin position="95"/>
        <end position="107"/>
    </location>
</feature>
<feature type="turn" evidence="9">
    <location>
        <begin position="108"/>
        <end position="110"/>
    </location>
</feature>
<feature type="helix" evidence="9">
    <location>
        <begin position="118"/>
        <end position="131"/>
    </location>
</feature>
<feature type="helix" evidence="9">
    <location>
        <begin position="136"/>
        <end position="160"/>
    </location>
</feature>
<feature type="helix" evidence="9">
    <location>
        <begin position="168"/>
        <end position="178"/>
    </location>
</feature>
<feature type="helix" evidence="9">
    <location>
        <begin position="181"/>
        <end position="188"/>
    </location>
</feature>
<feature type="helix" evidence="9">
    <location>
        <begin position="189"/>
        <end position="191"/>
    </location>
</feature>
<feature type="strand" evidence="9">
    <location>
        <begin position="192"/>
        <end position="194"/>
    </location>
</feature>
<feature type="helix" evidence="9">
    <location>
        <begin position="198"/>
        <end position="201"/>
    </location>
</feature>
<feature type="helix" evidence="9">
    <location>
        <begin position="204"/>
        <end position="225"/>
    </location>
</feature>
<feature type="turn" evidence="10">
    <location>
        <begin position="226"/>
        <end position="228"/>
    </location>
</feature>
<feature type="helix" evidence="9">
    <location>
        <begin position="238"/>
        <end position="246"/>
    </location>
</feature>
<feature type="helix" evidence="9">
    <location>
        <begin position="250"/>
        <end position="282"/>
    </location>
</feature>
<feature type="helix" evidence="9">
    <location>
        <begin position="286"/>
        <end position="309"/>
    </location>
</feature>
<protein>
    <recommendedName>
        <fullName evidence="3">(2Z,6E)-hedycaryol synthase</fullName>
        <shortName evidence="3">HcS</shortName>
        <ecNumber evidence="2">4.2.3.187</ecNumber>
    </recommendedName>
</protein>
<comment type="function">
    <text evidence="2">Catalyzes the conversion of (2E,6E)-farnesyl diphosphate (FPP) into (2Z,6E)-hedycaryol via a 1,11-cyclization.</text>
</comment>
<comment type="catalytic activity">
    <reaction evidence="2">
        <text>(2E,6E)-farnesyl diphosphate + H2O = (2Z,6E)-hedycaryol + diphosphate</text>
        <dbReference type="Rhea" id="RHEA:54060"/>
        <dbReference type="ChEBI" id="CHEBI:15377"/>
        <dbReference type="ChEBI" id="CHEBI:33019"/>
        <dbReference type="ChEBI" id="CHEBI:138044"/>
        <dbReference type="ChEBI" id="CHEBI:175763"/>
        <dbReference type="EC" id="4.2.3.187"/>
    </reaction>
</comment>
<comment type="cofactor">
    <cofactor evidence="1">
        <name>Mg(2+)</name>
        <dbReference type="ChEBI" id="CHEBI:18420"/>
    </cofactor>
    <text evidence="1">Binds 3 Mg(2+) ions per subunit.</text>
</comment>
<comment type="pathway">
    <text evidence="4">Secondary metabolite biosynthesis; terpenoid biosynthesis.</text>
</comment>
<comment type="subunit">
    <text evidence="2">Homodimer.</text>
</comment>
<comment type="domain">
    <text evidence="5">The Asp-Asp-Xaa-Xaa-Xaa-Glu (DDXXXE) and Asn-Xaa-Xaa-Xaa-Ser-Xaa-Xaa-Xaa-Glu (NSE) motifs are important for the catalytic activity, presumably through binding to Mg(2+).</text>
</comment>
<comment type="miscellaneous">
    <text evidence="2">The 1,11-cyclization requires isomerization of (2E,6E)-farnesyl diphosphate (FPP) to nerolidyl diphosphate (NPP), the abstraction of the pyrophosphate from intermediate NPP leading to a (Z,E)-hedycaryl cation and finally an nucleophilic attack of a water molecule.</text>
</comment>
<comment type="similarity">
    <text evidence="4">Belongs to the terpene synthase family.</text>
</comment>
<dbReference type="EC" id="4.2.3.187" evidence="2"/>
<dbReference type="EMBL" id="AP010968">
    <property type="protein sequence ID" value="BAJ25873.1"/>
    <property type="molecule type" value="Genomic_DNA"/>
</dbReference>
<dbReference type="EMBL" id="AP010968">
    <property type="protein sequence ID" value="BAJ33405.1"/>
    <property type="molecule type" value="Genomic_DNA"/>
</dbReference>
<dbReference type="RefSeq" id="WP_014133196.1">
    <property type="nucleotide sequence ID" value="NC_016109.1"/>
</dbReference>
<dbReference type="PDB" id="4MC0">
    <property type="method" value="X-ray"/>
    <property type="resolution" value="2.70 A"/>
    <property type="chains" value="A/B=1-338"/>
</dbReference>
<dbReference type="PDB" id="4MC3">
    <property type="method" value="X-ray"/>
    <property type="resolution" value="1.50 A"/>
    <property type="chains" value="A=1-338"/>
</dbReference>
<dbReference type="PDB" id="4MC8">
    <property type="method" value="X-ray"/>
    <property type="resolution" value="1.90 A"/>
    <property type="chains" value="A=1-338"/>
</dbReference>
<dbReference type="PDBsum" id="4MC0"/>
<dbReference type="PDBsum" id="4MC3"/>
<dbReference type="PDBsum" id="4MC8"/>
<dbReference type="SMR" id="E4MYY0"/>
<dbReference type="STRING" id="452652.KSE_00200t"/>
<dbReference type="KEGG" id="ksk:KSE_00200t"/>
<dbReference type="KEGG" id="ksk:KSE_76540t"/>
<dbReference type="PATRIC" id="fig|452652.3.peg.18"/>
<dbReference type="eggNOG" id="ENOG5033VJC">
    <property type="taxonomic scope" value="Bacteria"/>
</dbReference>
<dbReference type="HOGENOM" id="CLU_042538_4_0_11"/>
<dbReference type="BRENDA" id="4.2.3.187">
    <property type="organism ID" value="13720"/>
</dbReference>
<dbReference type="UniPathway" id="UPA00213"/>
<dbReference type="EvolutionaryTrace" id="E4MYY0"/>
<dbReference type="Proteomes" id="UP000007076">
    <property type="component" value="Chromosome"/>
</dbReference>
<dbReference type="GO" id="GO:0046872">
    <property type="term" value="F:metal ion binding"/>
    <property type="evidence" value="ECO:0007669"/>
    <property type="project" value="UniProtKB-KW"/>
</dbReference>
<dbReference type="GO" id="GO:0010333">
    <property type="term" value="F:terpene synthase activity"/>
    <property type="evidence" value="ECO:0000314"/>
    <property type="project" value="UniProtKB"/>
</dbReference>
<dbReference type="GO" id="GO:0016114">
    <property type="term" value="P:terpenoid biosynthetic process"/>
    <property type="evidence" value="ECO:0007669"/>
    <property type="project" value="UniProtKB-UniPathway"/>
</dbReference>
<dbReference type="FunFam" id="1.10.600.10:FF:000044">
    <property type="entry name" value="(2Z,6E)-hedycaryol synthase"/>
    <property type="match status" value="1"/>
</dbReference>
<dbReference type="Gene3D" id="1.10.600.10">
    <property type="entry name" value="Farnesyl Diphosphate Synthase"/>
    <property type="match status" value="1"/>
</dbReference>
<dbReference type="InterPro" id="IPR008949">
    <property type="entry name" value="Isoprenoid_synthase_dom_sf"/>
</dbReference>
<dbReference type="InterPro" id="IPR034686">
    <property type="entry name" value="Terpene_cyclase-like_2"/>
</dbReference>
<dbReference type="PANTHER" id="PTHR35201:SF4">
    <property type="entry name" value="BETA-PINACENE SYNTHASE-RELATED"/>
    <property type="match status" value="1"/>
</dbReference>
<dbReference type="PANTHER" id="PTHR35201">
    <property type="entry name" value="TERPENE SYNTHASE"/>
    <property type="match status" value="1"/>
</dbReference>
<dbReference type="Pfam" id="PF19086">
    <property type="entry name" value="Terpene_syn_C_2"/>
    <property type="match status" value="1"/>
</dbReference>
<dbReference type="SFLD" id="SFLDS00005">
    <property type="entry name" value="Isoprenoid_Synthase_Type_I"/>
    <property type="match status" value="1"/>
</dbReference>
<dbReference type="SFLD" id="SFLDG01020">
    <property type="entry name" value="Terpene_Cyclase_Like_2"/>
    <property type="match status" value="1"/>
</dbReference>
<dbReference type="SUPFAM" id="SSF48576">
    <property type="entry name" value="Terpenoid synthases"/>
    <property type="match status" value="1"/>
</dbReference>
<keyword id="KW-0002">3D-structure</keyword>
<keyword id="KW-0456">Lyase</keyword>
<keyword id="KW-0460">Magnesium</keyword>
<keyword id="KW-0479">Metal-binding</keyword>
<keyword id="KW-1185">Reference proteome</keyword>
<organism>
    <name type="scientific">Kitasatospora setae (strain ATCC 33774 / DSM 43861 / JCM 3304 / KCC A-0304 / NBRC 14216 / KM-6054)</name>
    <name type="common">Streptomyces setae</name>
    <dbReference type="NCBI Taxonomy" id="452652"/>
    <lineage>
        <taxon>Bacteria</taxon>
        <taxon>Bacillati</taxon>
        <taxon>Actinomycetota</taxon>
        <taxon>Actinomycetes</taxon>
        <taxon>Kitasatosporales</taxon>
        <taxon>Streptomycetaceae</taxon>
        <taxon>Kitasatospora</taxon>
    </lineage>
</organism>
<gene>
    <name evidence="6" type="ordered locus">KSE_00200t</name>
    <name evidence="7" type="ordered locus">KSE_76540t</name>
</gene>
<reference key="1">
    <citation type="journal article" date="2010" name="DNA Res.">
        <title>Genome sequence of Kitasatospora setae NBRC 14216T: an evolutionary snapshot of the family Streptomycetaceae.</title>
        <authorList>
            <person name="Ichikawa N."/>
            <person name="Oguchi A."/>
            <person name="Ikeda H."/>
            <person name="Ishikawa J."/>
            <person name="Kitani S."/>
            <person name="Watanabe Y."/>
            <person name="Nakamura S."/>
            <person name="Katano Y."/>
            <person name="Kishi E."/>
            <person name="Sasagawa M."/>
            <person name="Ankai A."/>
            <person name="Fukui S."/>
            <person name="Hashimoto Y."/>
            <person name="Kamata S."/>
            <person name="Otoguro M."/>
            <person name="Tanikawa S."/>
            <person name="Nihira T."/>
            <person name="Horinouchi S."/>
            <person name="Ohnishi Y."/>
            <person name="Hayakawa M."/>
            <person name="Kuzuyama T."/>
            <person name="Arisawa A."/>
            <person name="Nomoto F."/>
            <person name="Miura H."/>
            <person name="Takahashi Y."/>
            <person name="Fujita N."/>
        </authorList>
    </citation>
    <scope>NUCLEOTIDE SEQUENCE [LARGE SCALE GENOMIC DNA]</scope>
    <source>
        <strain evidence="8">ATCC 33774 / DSM 43861 / JCM 3304 / KCC A-0304 / NBRC 14216 / KM-6054</strain>
    </source>
</reference>
<reference key="2">
    <citation type="journal article" date="2014" name="ChemBioChem">
        <title>Hedycaryol synthase in complex with nerolidol reveals terpene cyclase mechanism.</title>
        <authorList>
            <person name="Baer P."/>
            <person name="Rabe P."/>
            <person name="Citron C.A."/>
            <person name="de Oliveira Mann C.C."/>
            <person name="Kaufmann N."/>
            <person name="Groll M."/>
            <person name="Dickschat J.S."/>
        </authorList>
    </citation>
    <scope>X-RAY CRYSTALLOGRAPHY (1.50 ANGSTROMS)</scope>
    <scope>FUNCTION</scope>
    <scope>CATALYTIC ACTIVITY</scope>
    <scope>MUTAGENESIS OF ASP-82; PHE-149; MET-181; TRP-309; HIS-310; ARG-315 AND TYR-316</scope>
    <scope>DOMAIN</scope>
    <scope>SUBUNIT</scope>
    <source>
        <strain>ATCC 33774 / DSM 43861 / JCM 3304 / KCC A-0304 / NBRC 14216 / KM-6054</strain>
    </source>
</reference>
<sequence>MAEFEIPDFYVPFPLECNPHLEEASRAMWEWIDANGLAPTERARDRMRRTGADLSGAYVWPRADLDTLTIGLKWIALTFRIDDQIDEDDTAERLPARMTAIDELRGTLHGLPVSGRSPTARALGALWQETALGRPATWCDAFIGHFEAFLQTYTTEAGLNAHGAGLRLDDYLDRRMYSVGMPWLWDLDELRLPIFLPGSVRTCGPMNKLRRAGALHIALVNDVFSVERETLVGYQHNAVTIIREAQGCSLQEAVDQVAVLVEAQLHTVLQARQELLEELDRQALPSRAREAAVDYAANVAANLSGQLVWHSSVERYAVDDLQSAADPRATPTTSSLGI</sequence>
<accession>E4MYY0</accession>
<evidence type="ECO:0000250" key="1">
    <source>
        <dbReference type="UniProtKB" id="B5HDJ6"/>
    </source>
</evidence>
<evidence type="ECO:0000269" key="2">
    <source>
    </source>
</evidence>
<evidence type="ECO:0000303" key="3">
    <source>
    </source>
</evidence>
<evidence type="ECO:0000305" key="4"/>
<evidence type="ECO:0000305" key="5">
    <source>
    </source>
</evidence>
<evidence type="ECO:0000312" key="6">
    <source>
        <dbReference type="EMBL" id="BAJ25873.1"/>
    </source>
</evidence>
<evidence type="ECO:0000312" key="7">
    <source>
        <dbReference type="EMBL" id="BAJ33405.1"/>
    </source>
</evidence>
<evidence type="ECO:0000312" key="8">
    <source>
        <dbReference type="Proteomes" id="UP000007076"/>
    </source>
</evidence>
<evidence type="ECO:0007829" key="9">
    <source>
        <dbReference type="PDB" id="4MC3"/>
    </source>
</evidence>
<evidence type="ECO:0007829" key="10">
    <source>
        <dbReference type="PDB" id="4MC8"/>
    </source>
</evidence>